<dbReference type="EMBL" id="AM494475">
    <property type="protein sequence ID" value="CAM79420.1"/>
    <property type="molecule type" value="Genomic_DNA"/>
</dbReference>
<dbReference type="RefSeq" id="WP_011944418.1">
    <property type="nucleotide sequence ID" value="NC_009488.1"/>
</dbReference>
<dbReference type="SMR" id="A5CCJ0"/>
<dbReference type="KEGG" id="ots:OTBS_0354"/>
<dbReference type="eggNOG" id="COG0100">
    <property type="taxonomic scope" value="Bacteria"/>
</dbReference>
<dbReference type="HOGENOM" id="CLU_072439_5_0_5"/>
<dbReference type="Proteomes" id="UP000001565">
    <property type="component" value="Chromosome"/>
</dbReference>
<dbReference type="GO" id="GO:1990904">
    <property type="term" value="C:ribonucleoprotein complex"/>
    <property type="evidence" value="ECO:0007669"/>
    <property type="project" value="UniProtKB-KW"/>
</dbReference>
<dbReference type="GO" id="GO:0005840">
    <property type="term" value="C:ribosome"/>
    <property type="evidence" value="ECO:0007669"/>
    <property type="project" value="UniProtKB-KW"/>
</dbReference>
<dbReference type="GO" id="GO:0019843">
    <property type="term" value="F:rRNA binding"/>
    <property type="evidence" value="ECO:0007669"/>
    <property type="project" value="UniProtKB-UniRule"/>
</dbReference>
<dbReference type="GO" id="GO:0003735">
    <property type="term" value="F:structural constituent of ribosome"/>
    <property type="evidence" value="ECO:0007669"/>
    <property type="project" value="InterPro"/>
</dbReference>
<dbReference type="GO" id="GO:0006412">
    <property type="term" value="P:translation"/>
    <property type="evidence" value="ECO:0007669"/>
    <property type="project" value="UniProtKB-UniRule"/>
</dbReference>
<dbReference type="Gene3D" id="3.30.420.80">
    <property type="entry name" value="Ribosomal protein S11"/>
    <property type="match status" value="1"/>
</dbReference>
<dbReference type="HAMAP" id="MF_01310">
    <property type="entry name" value="Ribosomal_uS11"/>
    <property type="match status" value="1"/>
</dbReference>
<dbReference type="InterPro" id="IPR001971">
    <property type="entry name" value="Ribosomal_uS11"/>
</dbReference>
<dbReference type="InterPro" id="IPR019981">
    <property type="entry name" value="Ribosomal_uS11_bac-type"/>
</dbReference>
<dbReference type="InterPro" id="IPR036967">
    <property type="entry name" value="Ribosomal_uS11_sf"/>
</dbReference>
<dbReference type="NCBIfam" id="NF003698">
    <property type="entry name" value="PRK05309.1"/>
    <property type="match status" value="1"/>
</dbReference>
<dbReference type="NCBIfam" id="TIGR03632">
    <property type="entry name" value="uS11_bact"/>
    <property type="match status" value="1"/>
</dbReference>
<dbReference type="PANTHER" id="PTHR11759">
    <property type="entry name" value="40S RIBOSOMAL PROTEIN S14/30S RIBOSOMAL PROTEIN S11"/>
    <property type="match status" value="1"/>
</dbReference>
<dbReference type="Pfam" id="PF00411">
    <property type="entry name" value="Ribosomal_S11"/>
    <property type="match status" value="1"/>
</dbReference>
<dbReference type="PIRSF" id="PIRSF002131">
    <property type="entry name" value="Ribosomal_S11"/>
    <property type="match status" value="1"/>
</dbReference>
<dbReference type="SUPFAM" id="SSF53137">
    <property type="entry name" value="Translational machinery components"/>
    <property type="match status" value="1"/>
</dbReference>
<evidence type="ECO:0000255" key="1">
    <source>
        <dbReference type="HAMAP-Rule" id="MF_01310"/>
    </source>
</evidence>
<evidence type="ECO:0000305" key="2"/>
<reference key="1">
    <citation type="journal article" date="2007" name="Proc. Natl. Acad. Sci. U.S.A.">
        <title>The Orientia tsutsugamushi genome reveals massive proliferation of conjugative type IV secretion system and host-cell interaction genes.</title>
        <authorList>
            <person name="Cho N.-H."/>
            <person name="Kim H.-R."/>
            <person name="Lee J.-H."/>
            <person name="Kim S.-Y."/>
            <person name="Kim J."/>
            <person name="Cha S."/>
            <person name="Kim S.-Y."/>
            <person name="Darby A.C."/>
            <person name="Fuxelius H.-H."/>
            <person name="Yin J."/>
            <person name="Kim J.H."/>
            <person name="Kim J."/>
            <person name="Lee S.J."/>
            <person name="Koh Y.-S."/>
            <person name="Jang W.-J."/>
            <person name="Park K.-H."/>
            <person name="Andersson S.G.E."/>
            <person name="Choi M.-S."/>
            <person name="Kim I.-S."/>
        </authorList>
    </citation>
    <scope>NUCLEOTIDE SEQUENCE [LARGE SCALE GENOMIC DNA]</scope>
    <source>
        <strain>Boryong</strain>
    </source>
</reference>
<keyword id="KW-1185">Reference proteome</keyword>
<keyword id="KW-0687">Ribonucleoprotein</keyword>
<keyword id="KW-0689">Ribosomal protein</keyword>
<keyword id="KW-0694">RNA-binding</keyword>
<keyword id="KW-0699">rRNA-binding</keyword>
<comment type="function">
    <text evidence="1">Located on the platform of the 30S subunit, it bridges several disparate RNA helices of the 16S rRNA. Forms part of the Shine-Dalgarno cleft in the 70S ribosome.</text>
</comment>
<comment type="subunit">
    <text evidence="1">Part of the 30S ribosomal subunit. Interacts with proteins S7 and S18. Binds to IF-3.</text>
</comment>
<comment type="similarity">
    <text evidence="1">Belongs to the universal ribosomal protein uS11 family.</text>
</comment>
<gene>
    <name evidence="1" type="primary">rpsK</name>
    <name type="ordered locus">OTBS_0354</name>
</gene>
<sequence length="126" mass="13664">MYNAKTKKKRKNITLGIVYIKSTFNNTIVTFTDMQGNAIAALSAGAIGFKGAKKATPYAAQVIVEKVSEVAKEHGIKTLSIRIQGAGSQRESALRAIFNQNFIVTSITDTSPVAHNGCRPPKKRRV</sequence>
<protein>
    <recommendedName>
        <fullName evidence="1">Small ribosomal subunit protein uS11</fullName>
    </recommendedName>
    <alternativeName>
        <fullName evidence="2">30S ribosomal protein S11</fullName>
    </alternativeName>
</protein>
<organism>
    <name type="scientific">Orientia tsutsugamushi (strain Boryong)</name>
    <name type="common">Rickettsia tsutsugamushi</name>
    <dbReference type="NCBI Taxonomy" id="357244"/>
    <lineage>
        <taxon>Bacteria</taxon>
        <taxon>Pseudomonadati</taxon>
        <taxon>Pseudomonadota</taxon>
        <taxon>Alphaproteobacteria</taxon>
        <taxon>Rickettsiales</taxon>
        <taxon>Rickettsiaceae</taxon>
        <taxon>Rickettsieae</taxon>
        <taxon>Orientia</taxon>
    </lineage>
</organism>
<name>RS11_ORITB</name>
<accession>A5CCJ0</accession>
<feature type="chain" id="PRO_0000323342" description="Small ribosomal subunit protein uS11">
    <location>
        <begin position="1"/>
        <end position="126"/>
    </location>
</feature>
<proteinExistence type="inferred from homology"/>